<feature type="signal peptide" evidence="6">
    <location>
        <begin position="1"/>
        <end position="16"/>
    </location>
</feature>
<feature type="chain" id="PRO_0000001199" description="Amelogenin, X isoform">
    <location>
        <begin position="17"/>
        <end position="191"/>
    </location>
</feature>
<feature type="region of interest" description="Disordered" evidence="3">
    <location>
        <begin position="95"/>
        <end position="191"/>
    </location>
</feature>
<feature type="compositionally biased region" description="Low complexity" evidence="3">
    <location>
        <begin position="95"/>
        <end position="117"/>
    </location>
</feature>
<feature type="compositionally biased region" description="Pro residues" evidence="3">
    <location>
        <begin position="118"/>
        <end position="171"/>
    </location>
</feature>
<feature type="modified residue" description="Phosphoserine" evidence="1">
    <location>
        <position position="32"/>
    </location>
</feature>
<feature type="splice variant" id="VSP_000228" description="In isoform 2." evidence="12">
    <location>
        <begin position="19"/>
        <end position="34"/>
    </location>
</feature>
<feature type="splice variant" id="VSP_000229" description="In isoform 3." evidence="11">
    <original>E</original>
    <variation>ENSHSQAINVDRTAL</variation>
    <location>
        <position position="34"/>
    </location>
</feature>
<feature type="sequence variant" id="VAR_037581" description="In AI1E; dbSNP:rs104894738." evidence="5">
    <original>W</original>
    <variation>S</variation>
    <location>
        <position position="4"/>
    </location>
</feature>
<feature type="sequence variant" id="VAR_000559" description="In AI1E." evidence="9">
    <original>ILFA</original>
    <variation>T</variation>
    <location>
        <begin position="5"/>
        <end position="8"/>
    </location>
</feature>
<feature type="sequence variant" id="VAR_037582" description="In AI1E; dbSNP:rs104894733." evidence="8">
    <original>T</original>
    <variation>I</variation>
    <location>
        <position position="37"/>
    </location>
</feature>
<feature type="sequence variant" id="VAR_037583" description="In AI1E; dbSNP:rs104894736." evidence="4 10">
    <original>P</original>
    <variation>T</variation>
    <location>
        <position position="56"/>
    </location>
</feature>
<feature type="sequence conflict" description="In Ref. 5; AA sequence." evidence="12" ref="5">
    <original>PS</original>
    <variation>SP</variation>
    <location>
        <begin position="50"/>
        <end position="51"/>
    </location>
</feature>
<feature type="sequence conflict" description="In Ref. 8; AA sequence." evidence="12" ref="8">
    <original>D</original>
    <variation>H</variation>
    <location>
        <position position="173"/>
    </location>
</feature>
<feature type="sequence conflict" description="In Ref. 7; AAA62826/CAA32613." evidence="12" ref="7">
    <original>D</original>
    <variation>VSIF</variation>
    <location>
        <position position="191"/>
    </location>
</feature>
<organism>
    <name type="scientific">Homo sapiens</name>
    <name type="common">Human</name>
    <dbReference type="NCBI Taxonomy" id="9606"/>
    <lineage>
        <taxon>Eukaryota</taxon>
        <taxon>Metazoa</taxon>
        <taxon>Chordata</taxon>
        <taxon>Craniata</taxon>
        <taxon>Vertebrata</taxon>
        <taxon>Euteleostomi</taxon>
        <taxon>Mammalia</taxon>
        <taxon>Eutheria</taxon>
        <taxon>Euarchontoglires</taxon>
        <taxon>Primates</taxon>
        <taxon>Haplorrhini</taxon>
        <taxon>Catarrhini</taxon>
        <taxon>Hominidae</taxon>
        <taxon>Homo</taxon>
    </lineage>
</organism>
<gene>
    <name type="primary">AMELX</name>
    <name type="synonym">AMG</name>
    <name type="synonym">AMGX</name>
</gene>
<dbReference type="EMBL" id="M86932">
    <property type="protein sequence ID" value="AAA51717.1"/>
    <property type="molecule type" value="mRNA"/>
</dbReference>
<dbReference type="EMBL" id="AF436849">
    <property type="protein sequence ID" value="AAL30432.1"/>
    <property type="molecule type" value="mRNA"/>
</dbReference>
<dbReference type="EMBL" id="AY040206">
    <property type="protein sequence ID" value="AAK77213.1"/>
    <property type="molecule type" value="Genomic_DNA"/>
</dbReference>
<dbReference type="EMBL" id="AC002366">
    <property type="protein sequence ID" value="AAC21581.1"/>
    <property type="molecule type" value="Genomic_DNA"/>
</dbReference>
<dbReference type="EMBL" id="BC074951">
    <property type="protein sequence ID" value="AAH74951.1"/>
    <property type="molecule type" value="mRNA"/>
</dbReference>
<dbReference type="EMBL" id="M55418">
    <property type="protein sequence ID" value="AAA62826.1"/>
    <property type="molecule type" value="Genomic_DNA"/>
</dbReference>
<dbReference type="EMBL" id="X14440">
    <property type="protein sequence ID" value="CAA32613.1"/>
    <property type="molecule type" value="Genomic_DNA"/>
</dbReference>
<dbReference type="EMBL" id="S67147">
    <property type="protein sequence ID" value="AAB29184.1"/>
    <property type="molecule type" value="mRNA"/>
</dbReference>
<dbReference type="CCDS" id="CCDS14144.1">
    <molecule id="Q99217-1"/>
</dbReference>
<dbReference type="CCDS" id="CCDS14145.1">
    <molecule id="Q99217-3"/>
</dbReference>
<dbReference type="CCDS" id="CCDS14146.1">
    <molecule id="Q99217-2"/>
</dbReference>
<dbReference type="PIR" id="B41816">
    <property type="entry name" value="A41816"/>
</dbReference>
<dbReference type="RefSeq" id="NP_001133.1">
    <molecule id="Q99217-1"/>
    <property type="nucleotide sequence ID" value="NM_001142.2"/>
</dbReference>
<dbReference type="RefSeq" id="NP_872621.1">
    <molecule id="Q99217-3"/>
    <property type="nucleotide sequence ID" value="NM_182680.1"/>
</dbReference>
<dbReference type="RefSeq" id="NP_872622.1">
    <molecule id="Q99217-2"/>
    <property type="nucleotide sequence ID" value="NM_182681.1"/>
</dbReference>
<dbReference type="FunCoup" id="Q99217">
    <property type="interactions" value="1"/>
</dbReference>
<dbReference type="IntAct" id="Q99217">
    <property type="interactions" value="1"/>
</dbReference>
<dbReference type="STRING" id="9606.ENSP00000370088"/>
<dbReference type="PhosphoSitePlus" id="Q99217"/>
<dbReference type="BioMuta" id="AMELX"/>
<dbReference type="DMDM" id="1168430"/>
<dbReference type="PaxDb" id="9606-ENSP00000370088"/>
<dbReference type="PeptideAtlas" id="Q99217"/>
<dbReference type="ProteomicsDB" id="78250">
    <molecule id="Q99217-3"/>
</dbReference>
<dbReference type="TopDownProteomics" id="Q99217-2">
    <molecule id="Q99217-2"/>
</dbReference>
<dbReference type="Antibodypedia" id="23742">
    <property type="antibodies" value="164 antibodies from 21 providers"/>
</dbReference>
<dbReference type="DNASU" id="265"/>
<dbReference type="Ensembl" id="ENST00000348912.4">
    <molecule id="Q99217-2"/>
    <property type="protein sequence ID" value="ENSP00000335312.5"/>
    <property type="gene ID" value="ENSG00000125363.14"/>
</dbReference>
<dbReference type="Ensembl" id="ENST00000380712.7">
    <molecule id="Q99217-3"/>
    <property type="protein sequence ID" value="ENSP00000370088.3"/>
    <property type="gene ID" value="ENSG00000125363.14"/>
</dbReference>
<dbReference type="Ensembl" id="ENST00000380714.7">
    <molecule id="Q99217-1"/>
    <property type="protein sequence ID" value="ENSP00000370090.3"/>
    <property type="gene ID" value="ENSG00000125363.14"/>
</dbReference>
<dbReference type="GeneID" id="265"/>
<dbReference type="KEGG" id="hsa:265"/>
<dbReference type="MANE-Select" id="ENST00000380714.7">
    <property type="protein sequence ID" value="ENSP00000370090.3"/>
    <property type="RefSeq nucleotide sequence ID" value="NM_001142.2"/>
    <property type="RefSeq protein sequence ID" value="NP_001133.1"/>
</dbReference>
<dbReference type="UCSC" id="uc004cus.3">
    <molecule id="Q99217-1"/>
    <property type="organism name" value="human"/>
</dbReference>
<dbReference type="AGR" id="HGNC:461"/>
<dbReference type="CTD" id="265"/>
<dbReference type="DisGeNET" id="265"/>
<dbReference type="GeneCards" id="AMELX"/>
<dbReference type="HGNC" id="HGNC:461">
    <property type="gene designation" value="AMELX"/>
</dbReference>
<dbReference type="HPA" id="ENSG00000125363">
    <property type="expression patterns" value="Not detected"/>
</dbReference>
<dbReference type="MalaCards" id="AMELX"/>
<dbReference type="MIM" id="300391">
    <property type="type" value="gene"/>
</dbReference>
<dbReference type="MIM" id="301200">
    <property type="type" value="phenotype"/>
</dbReference>
<dbReference type="neXtProt" id="NX_Q99217"/>
<dbReference type="OpenTargets" id="ENSG00000125363"/>
<dbReference type="Orphanet" id="100033">
    <property type="disease" value="Hypomaturation amelogenesis imperfecta"/>
</dbReference>
<dbReference type="PharmGKB" id="PA24766"/>
<dbReference type="VEuPathDB" id="HostDB:ENSG00000125363"/>
<dbReference type="eggNOG" id="ENOG502S4XP">
    <property type="taxonomic scope" value="Eukaryota"/>
</dbReference>
<dbReference type="GeneTree" id="ENSGT00390000009151"/>
<dbReference type="HOGENOM" id="CLU_120753_0_0_1"/>
<dbReference type="InParanoid" id="Q99217"/>
<dbReference type="OMA" id="LPIQPYE"/>
<dbReference type="OrthoDB" id="9030267at2759"/>
<dbReference type="PAN-GO" id="Q99217">
    <property type="GO annotations" value="3 GO annotations based on evolutionary models"/>
</dbReference>
<dbReference type="PhylomeDB" id="Q99217"/>
<dbReference type="TreeFam" id="TF337092"/>
<dbReference type="PathwayCommons" id="Q99217"/>
<dbReference type="Reactome" id="R-HSA-381426">
    <property type="pathway name" value="Regulation of Insulin-like Growth Factor (IGF) transport and uptake by Insulin-like Growth Factor Binding Proteins (IGFBPs)"/>
</dbReference>
<dbReference type="Reactome" id="R-HSA-8957275">
    <property type="pathway name" value="Post-translational protein phosphorylation"/>
</dbReference>
<dbReference type="SignaLink" id="Q99217"/>
<dbReference type="BioGRID-ORCS" id="265">
    <property type="hits" value="7 hits in 730 CRISPR screens"/>
</dbReference>
<dbReference type="GeneWiki" id="AMELX"/>
<dbReference type="GenomeRNAi" id="265"/>
<dbReference type="Pharos" id="Q99217">
    <property type="development level" value="Tbio"/>
</dbReference>
<dbReference type="PRO" id="PR:Q99217"/>
<dbReference type="Proteomes" id="UP000005640">
    <property type="component" value="Chromosome X"/>
</dbReference>
<dbReference type="RNAct" id="Q99217">
    <property type="molecule type" value="protein"/>
</dbReference>
<dbReference type="Bgee" id="ENSG00000125363">
    <property type="expression patterns" value="Expressed in male germ line stem cell (sensu Vertebrata) in testis and 25 other cell types or tissues"/>
</dbReference>
<dbReference type="GO" id="GO:0005604">
    <property type="term" value="C:basement membrane"/>
    <property type="evidence" value="ECO:0007669"/>
    <property type="project" value="Ensembl"/>
</dbReference>
<dbReference type="GO" id="GO:0009986">
    <property type="term" value="C:cell surface"/>
    <property type="evidence" value="ECO:0000250"/>
    <property type="project" value="BHF-UCL"/>
</dbReference>
<dbReference type="GO" id="GO:0062023">
    <property type="term" value="C:collagen-containing extracellular matrix"/>
    <property type="evidence" value="ECO:0000314"/>
    <property type="project" value="BHF-UCL"/>
</dbReference>
<dbReference type="GO" id="GO:0030139">
    <property type="term" value="C:endocytic vesicle"/>
    <property type="evidence" value="ECO:0007669"/>
    <property type="project" value="Ensembl"/>
</dbReference>
<dbReference type="GO" id="GO:0005788">
    <property type="term" value="C:endoplasmic reticulum lumen"/>
    <property type="evidence" value="ECO:0000304"/>
    <property type="project" value="Reactome"/>
</dbReference>
<dbReference type="GO" id="GO:0005576">
    <property type="term" value="C:extracellular region"/>
    <property type="evidence" value="ECO:0007669"/>
    <property type="project" value="UniProtKB-KW"/>
</dbReference>
<dbReference type="GO" id="GO:0032991">
    <property type="term" value="C:protein-containing complex"/>
    <property type="evidence" value="ECO:0007669"/>
    <property type="project" value="Ensembl"/>
</dbReference>
<dbReference type="GO" id="GO:0099080">
    <property type="term" value="C:supramolecular complex"/>
    <property type="evidence" value="ECO:0007669"/>
    <property type="project" value="Ensembl"/>
</dbReference>
<dbReference type="GO" id="GO:0005509">
    <property type="term" value="F:calcium ion binding"/>
    <property type="evidence" value="ECO:0007669"/>
    <property type="project" value="Ensembl"/>
</dbReference>
<dbReference type="GO" id="GO:0008083">
    <property type="term" value="F:growth factor activity"/>
    <property type="evidence" value="ECO:0000250"/>
    <property type="project" value="BHF-UCL"/>
</dbReference>
<dbReference type="GO" id="GO:0046848">
    <property type="term" value="F:hydroxyapatite binding"/>
    <property type="evidence" value="ECO:0000250"/>
    <property type="project" value="BHF-UCL"/>
</dbReference>
<dbReference type="GO" id="GO:0042802">
    <property type="term" value="F:identical protein binding"/>
    <property type="evidence" value="ECO:0000250"/>
    <property type="project" value="BHF-UCL"/>
</dbReference>
<dbReference type="GO" id="GO:0042803">
    <property type="term" value="F:protein homodimerization activity"/>
    <property type="evidence" value="ECO:0007669"/>
    <property type="project" value="Ensembl"/>
</dbReference>
<dbReference type="GO" id="GO:0031402">
    <property type="term" value="F:sodium ion binding"/>
    <property type="evidence" value="ECO:0007669"/>
    <property type="project" value="Ensembl"/>
</dbReference>
<dbReference type="GO" id="GO:0030345">
    <property type="term" value="F:structural constituent of tooth enamel"/>
    <property type="evidence" value="ECO:0000314"/>
    <property type="project" value="BHF-UCL"/>
</dbReference>
<dbReference type="GO" id="GO:0097186">
    <property type="term" value="P:amelogenesis"/>
    <property type="evidence" value="ECO:0000250"/>
    <property type="project" value="ARUK-UCL"/>
</dbReference>
<dbReference type="GO" id="GO:0031214">
    <property type="term" value="P:biomineral tissue development"/>
    <property type="evidence" value="ECO:0000304"/>
    <property type="project" value="BHF-UCL"/>
</dbReference>
<dbReference type="GO" id="GO:0007155">
    <property type="term" value="P:cell adhesion"/>
    <property type="evidence" value="ECO:0000250"/>
    <property type="project" value="BHF-UCL"/>
</dbReference>
<dbReference type="GO" id="GO:0002062">
    <property type="term" value="P:chondrocyte differentiation"/>
    <property type="evidence" value="ECO:0000250"/>
    <property type="project" value="BHF-UCL"/>
</dbReference>
<dbReference type="GO" id="GO:0070166">
    <property type="term" value="P:enamel mineralization"/>
    <property type="evidence" value="ECO:0000315"/>
    <property type="project" value="BHF-UCL"/>
</dbReference>
<dbReference type="GO" id="GO:0001837">
    <property type="term" value="P:epithelial to mesenchymal transition"/>
    <property type="evidence" value="ECO:0000250"/>
    <property type="project" value="BHF-UCL"/>
</dbReference>
<dbReference type="GO" id="GO:0042475">
    <property type="term" value="P:odontogenesis of dentin-containing tooth"/>
    <property type="evidence" value="ECO:0000250"/>
    <property type="project" value="BHF-UCL"/>
</dbReference>
<dbReference type="GO" id="GO:0001649">
    <property type="term" value="P:osteoblast differentiation"/>
    <property type="evidence" value="ECO:0000250"/>
    <property type="project" value="BHF-UCL"/>
</dbReference>
<dbReference type="GO" id="GO:0032967">
    <property type="term" value="P:positive regulation of collagen biosynthetic process"/>
    <property type="evidence" value="ECO:0000250"/>
    <property type="project" value="BHF-UCL"/>
</dbReference>
<dbReference type="GO" id="GO:0070172">
    <property type="term" value="P:positive regulation of tooth mineralization"/>
    <property type="evidence" value="ECO:0000304"/>
    <property type="project" value="BHF-UCL"/>
</dbReference>
<dbReference type="GO" id="GO:0042127">
    <property type="term" value="P:regulation of cell population proliferation"/>
    <property type="evidence" value="ECO:0000250"/>
    <property type="project" value="BHF-UCL"/>
</dbReference>
<dbReference type="GO" id="GO:0051592">
    <property type="term" value="P:response to calcium ion"/>
    <property type="evidence" value="ECO:0007669"/>
    <property type="project" value="Ensembl"/>
</dbReference>
<dbReference type="GO" id="GO:0007584">
    <property type="term" value="P:response to nutrient"/>
    <property type="evidence" value="ECO:0007669"/>
    <property type="project" value="Ensembl"/>
</dbReference>
<dbReference type="GO" id="GO:0009410">
    <property type="term" value="P:response to xenobiotic stimulus"/>
    <property type="evidence" value="ECO:0007669"/>
    <property type="project" value="Ensembl"/>
</dbReference>
<dbReference type="GO" id="GO:0007165">
    <property type="term" value="P:signal transduction"/>
    <property type="evidence" value="ECO:0000304"/>
    <property type="project" value="BHF-UCL"/>
</dbReference>
<dbReference type="GO" id="GO:0034505">
    <property type="term" value="P:tooth mineralization"/>
    <property type="evidence" value="ECO:0000315"/>
    <property type="project" value="BHF-UCL"/>
</dbReference>
<dbReference type="InterPro" id="IPR004116">
    <property type="entry name" value="Amelogenin"/>
</dbReference>
<dbReference type="PANTHER" id="PTHR46794:SF2">
    <property type="entry name" value="AMELOGENIN, X ISOFORM"/>
    <property type="match status" value="1"/>
</dbReference>
<dbReference type="PANTHER" id="PTHR46794">
    <property type="entry name" value="AMELOGENIN, Y ISOFORM"/>
    <property type="match status" value="1"/>
</dbReference>
<dbReference type="Pfam" id="PF02948">
    <property type="entry name" value="Amelogenin"/>
    <property type="match status" value="1"/>
</dbReference>
<dbReference type="PRINTS" id="PR01757">
    <property type="entry name" value="AMELOGENIN"/>
</dbReference>
<dbReference type="SMART" id="SM00818">
    <property type="entry name" value="Amelogenin"/>
    <property type="match status" value="1"/>
</dbReference>
<sequence length="191" mass="21603">MGTWILFACLLGAAFAMPLPPHPGHPGYINFSYEVLTPLKWYQSIRPPYPSYGYEPMGGWLHHQIIPVLSQQHPPTHTLQPHHHIPVVPAQQPVIPQQPMMPVPGQHSMTPIQHHQPNLPPPAQQPYQPQPVQPQPHQPMQPQPPVHPMQPLPPQPPLPPMFPMQPLPPMLPDLTLEAWPSTDKTKREEVD</sequence>
<protein>
    <recommendedName>
        <fullName>Amelogenin, X isoform</fullName>
    </recommendedName>
</protein>
<keyword id="KW-0025">Alternative splicing</keyword>
<keyword id="KW-0986">Amelogenesis imperfecta</keyword>
<keyword id="KW-0091">Biomineralization</keyword>
<keyword id="KW-0903">Direct protein sequencing</keyword>
<keyword id="KW-0225">Disease variant</keyword>
<keyword id="KW-0272">Extracellular matrix</keyword>
<keyword id="KW-0597">Phosphoprotein</keyword>
<keyword id="KW-1185">Reference proteome</keyword>
<keyword id="KW-0677">Repeat</keyword>
<keyword id="KW-0964">Secreted</keyword>
<keyword id="KW-0732">Signal</keyword>
<comment type="function">
    <text>Plays a role in biomineralization. Seems to regulate the formation of crystallites during the secretory stage of tooth enamel development. Thought to play a major role in the structural organization and mineralization of developing enamel.</text>
</comment>
<comment type="subunit">
    <text evidence="2">Interacts with KRT5.</text>
</comment>
<comment type="subcellular location">
    <subcellularLocation>
        <location evidence="13">Secreted</location>
        <location evidence="13">Extracellular space</location>
        <location evidence="13">Extracellular matrix</location>
    </subcellularLocation>
</comment>
<comment type="alternative products">
    <event type="alternative splicing"/>
    <isoform>
        <id>Q99217-1</id>
        <name>1</name>
        <sequence type="displayed"/>
    </isoform>
    <isoform>
        <id>Q99217-2</id>
        <name>2</name>
        <sequence type="described" ref="VSP_000228"/>
    </isoform>
    <isoform>
        <id>Q99217-3</id>
        <name>3</name>
        <name>Rare</name>
        <sequence type="described" ref="VSP_000229"/>
    </isoform>
    <text>Additional isoforms seem to exist.</text>
</comment>
<comment type="developmental stage">
    <text>Transiently but abundantly expressed by ameloblasts during tooth development. Amelogenin is the predominant protein in developing dental enamel.</text>
</comment>
<comment type="PTM">
    <text evidence="7">Phosphorylated by FAM20C in vitro.</text>
</comment>
<comment type="disease" evidence="4 5 8 9 10">
    <disease id="DI-00088">
        <name>Amelogenesis imperfecta 1E</name>
        <acronym>AI1E</acronym>
        <description>An X-linked defect of dental enamel formation. Teeth have only a thin layer of enamel with normal hardness. The thinness of the enamel makes the teeth appear small.</description>
        <dbReference type="MIM" id="301200"/>
    </disease>
    <text>The disease is caused by variants affecting the gene represented in this entry.</text>
</comment>
<comment type="similarity">
    <text evidence="12">Belongs to the amelogenin family.</text>
</comment>
<evidence type="ECO:0000250" key="1">
    <source>
        <dbReference type="UniProtKB" id="P02817"/>
    </source>
</evidence>
<evidence type="ECO:0000250" key="2">
    <source>
        <dbReference type="UniProtKB" id="P63277"/>
    </source>
</evidence>
<evidence type="ECO:0000256" key="3">
    <source>
        <dbReference type="SAM" id="MobiDB-lite"/>
    </source>
</evidence>
<evidence type="ECO:0000269" key="4">
    <source>
    </source>
</evidence>
<evidence type="ECO:0000269" key="5">
    <source>
    </source>
</evidence>
<evidence type="ECO:0000269" key="6">
    <source>
    </source>
</evidence>
<evidence type="ECO:0000269" key="7">
    <source>
    </source>
</evidence>
<evidence type="ECO:0000269" key="8">
    <source>
    </source>
</evidence>
<evidence type="ECO:0000269" key="9">
    <source>
    </source>
</evidence>
<evidence type="ECO:0000269" key="10">
    <source>
    </source>
</evidence>
<evidence type="ECO:0000303" key="11">
    <source>
    </source>
</evidence>
<evidence type="ECO:0000305" key="12"/>
<evidence type="ECO:0000305" key="13">
    <source>
    </source>
</evidence>
<reference key="1">
    <citation type="journal article" date="1992" name="Am. J. Hum. Genet.">
        <title>The human enamel protein gene amelogenin is expressed from both the X and the Y chromosomes.</title>
        <authorList>
            <person name="Salido E.C."/>
            <person name="Yen P.H."/>
            <person name="Koprivnikar K."/>
            <person name="Yu L.-C."/>
            <person name="Shapiro L.J."/>
        </authorList>
    </citation>
    <scope>NUCLEOTIDE SEQUENCE [MRNA] (ISOFORM 1)</scope>
    <source>
        <tissue>Tooth bud</tissue>
    </source>
</reference>
<reference key="2">
    <citation type="journal article" date="2002" name="Arch. Oral Biol.">
        <title>A nomenclature for X-linked amelogenesis imperfecta.</title>
        <authorList>
            <person name="Hart P.S."/>
            <person name="Hart T.C."/>
            <person name="Simmer J.P."/>
            <person name="Wright J.T."/>
        </authorList>
    </citation>
    <scope>NUCLEOTIDE SEQUENCE [MRNA] (ISOFORMS 1 AND 3)</scope>
</reference>
<reference key="3">
    <citation type="journal article" date="2005" name="Nature">
        <title>The DNA sequence of the human X chromosome.</title>
        <authorList>
            <person name="Ross M.T."/>
            <person name="Grafham D.V."/>
            <person name="Coffey A.J."/>
            <person name="Scherer S."/>
            <person name="McLay K."/>
            <person name="Muzny D."/>
            <person name="Platzer M."/>
            <person name="Howell G.R."/>
            <person name="Burrows C."/>
            <person name="Bird C.P."/>
            <person name="Frankish A."/>
            <person name="Lovell F.L."/>
            <person name="Howe K.L."/>
            <person name="Ashurst J.L."/>
            <person name="Fulton R.S."/>
            <person name="Sudbrak R."/>
            <person name="Wen G."/>
            <person name="Jones M.C."/>
            <person name="Hurles M.E."/>
            <person name="Andrews T.D."/>
            <person name="Scott C.E."/>
            <person name="Searle S."/>
            <person name="Ramser J."/>
            <person name="Whittaker A."/>
            <person name="Deadman R."/>
            <person name="Carter N.P."/>
            <person name="Hunt S.E."/>
            <person name="Chen R."/>
            <person name="Cree A."/>
            <person name="Gunaratne P."/>
            <person name="Havlak P."/>
            <person name="Hodgson A."/>
            <person name="Metzker M.L."/>
            <person name="Richards S."/>
            <person name="Scott G."/>
            <person name="Steffen D."/>
            <person name="Sodergren E."/>
            <person name="Wheeler D.A."/>
            <person name="Worley K.C."/>
            <person name="Ainscough R."/>
            <person name="Ambrose K.D."/>
            <person name="Ansari-Lari M.A."/>
            <person name="Aradhya S."/>
            <person name="Ashwell R.I."/>
            <person name="Babbage A.K."/>
            <person name="Bagguley C.L."/>
            <person name="Ballabio A."/>
            <person name="Banerjee R."/>
            <person name="Barker G.E."/>
            <person name="Barlow K.F."/>
            <person name="Barrett I.P."/>
            <person name="Bates K.N."/>
            <person name="Beare D.M."/>
            <person name="Beasley H."/>
            <person name="Beasley O."/>
            <person name="Beck A."/>
            <person name="Bethel G."/>
            <person name="Blechschmidt K."/>
            <person name="Brady N."/>
            <person name="Bray-Allen S."/>
            <person name="Bridgeman A.M."/>
            <person name="Brown A.J."/>
            <person name="Brown M.J."/>
            <person name="Bonnin D."/>
            <person name="Bruford E.A."/>
            <person name="Buhay C."/>
            <person name="Burch P."/>
            <person name="Burford D."/>
            <person name="Burgess J."/>
            <person name="Burrill W."/>
            <person name="Burton J."/>
            <person name="Bye J.M."/>
            <person name="Carder C."/>
            <person name="Carrel L."/>
            <person name="Chako J."/>
            <person name="Chapman J.C."/>
            <person name="Chavez D."/>
            <person name="Chen E."/>
            <person name="Chen G."/>
            <person name="Chen Y."/>
            <person name="Chen Z."/>
            <person name="Chinault C."/>
            <person name="Ciccodicola A."/>
            <person name="Clark S.Y."/>
            <person name="Clarke G."/>
            <person name="Clee C.M."/>
            <person name="Clegg S."/>
            <person name="Clerc-Blankenburg K."/>
            <person name="Clifford K."/>
            <person name="Cobley V."/>
            <person name="Cole C.G."/>
            <person name="Conquer J.S."/>
            <person name="Corby N."/>
            <person name="Connor R.E."/>
            <person name="David R."/>
            <person name="Davies J."/>
            <person name="Davis C."/>
            <person name="Davis J."/>
            <person name="Delgado O."/>
            <person name="Deshazo D."/>
            <person name="Dhami P."/>
            <person name="Ding Y."/>
            <person name="Dinh H."/>
            <person name="Dodsworth S."/>
            <person name="Draper H."/>
            <person name="Dugan-Rocha S."/>
            <person name="Dunham A."/>
            <person name="Dunn M."/>
            <person name="Durbin K.J."/>
            <person name="Dutta I."/>
            <person name="Eades T."/>
            <person name="Ellwood M."/>
            <person name="Emery-Cohen A."/>
            <person name="Errington H."/>
            <person name="Evans K.L."/>
            <person name="Faulkner L."/>
            <person name="Francis F."/>
            <person name="Frankland J."/>
            <person name="Fraser A.E."/>
            <person name="Galgoczy P."/>
            <person name="Gilbert J."/>
            <person name="Gill R."/>
            <person name="Gloeckner G."/>
            <person name="Gregory S.G."/>
            <person name="Gribble S."/>
            <person name="Griffiths C."/>
            <person name="Grocock R."/>
            <person name="Gu Y."/>
            <person name="Gwilliam R."/>
            <person name="Hamilton C."/>
            <person name="Hart E.A."/>
            <person name="Hawes A."/>
            <person name="Heath P.D."/>
            <person name="Heitmann K."/>
            <person name="Hennig S."/>
            <person name="Hernandez J."/>
            <person name="Hinzmann B."/>
            <person name="Ho S."/>
            <person name="Hoffs M."/>
            <person name="Howden P.J."/>
            <person name="Huckle E.J."/>
            <person name="Hume J."/>
            <person name="Hunt P.J."/>
            <person name="Hunt A.R."/>
            <person name="Isherwood J."/>
            <person name="Jacob L."/>
            <person name="Johnson D."/>
            <person name="Jones S."/>
            <person name="de Jong P.J."/>
            <person name="Joseph S.S."/>
            <person name="Keenan S."/>
            <person name="Kelly S."/>
            <person name="Kershaw J.K."/>
            <person name="Khan Z."/>
            <person name="Kioschis P."/>
            <person name="Klages S."/>
            <person name="Knights A.J."/>
            <person name="Kosiura A."/>
            <person name="Kovar-Smith C."/>
            <person name="Laird G.K."/>
            <person name="Langford C."/>
            <person name="Lawlor S."/>
            <person name="Leversha M."/>
            <person name="Lewis L."/>
            <person name="Liu W."/>
            <person name="Lloyd C."/>
            <person name="Lloyd D.M."/>
            <person name="Loulseged H."/>
            <person name="Loveland J.E."/>
            <person name="Lovell J.D."/>
            <person name="Lozado R."/>
            <person name="Lu J."/>
            <person name="Lyne R."/>
            <person name="Ma J."/>
            <person name="Maheshwari M."/>
            <person name="Matthews L.H."/>
            <person name="McDowall J."/>
            <person name="McLaren S."/>
            <person name="McMurray A."/>
            <person name="Meidl P."/>
            <person name="Meitinger T."/>
            <person name="Milne S."/>
            <person name="Miner G."/>
            <person name="Mistry S.L."/>
            <person name="Morgan M."/>
            <person name="Morris S."/>
            <person name="Mueller I."/>
            <person name="Mullikin J.C."/>
            <person name="Nguyen N."/>
            <person name="Nordsiek G."/>
            <person name="Nyakatura G."/>
            <person name="O'dell C.N."/>
            <person name="Okwuonu G."/>
            <person name="Palmer S."/>
            <person name="Pandian R."/>
            <person name="Parker D."/>
            <person name="Parrish J."/>
            <person name="Pasternak S."/>
            <person name="Patel D."/>
            <person name="Pearce A.V."/>
            <person name="Pearson D.M."/>
            <person name="Pelan S.E."/>
            <person name="Perez L."/>
            <person name="Porter K.M."/>
            <person name="Ramsey Y."/>
            <person name="Reichwald K."/>
            <person name="Rhodes S."/>
            <person name="Ridler K.A."/>
            <person name="Schlessinger D."/>
            <person name="Schueler M.G."/>
            <person name="Sehra H.K."/>
            <person name="Shaw-Smith C."/>
            <person name="Shen H."/>
            <person name="Sheridan E.M."/>
            <person name="Shownkeen R."/>
            <person name="Skuce C.D."/>
            <person name="Smith M.L."/>
            <person name="Sotheran E.C."/>
            <person name="Steingruber H.E."/>
            <person name="Steward C.A."/>
            <person name="Storey R."/>
            <person name="Swann R.M."/>
            <person name="Swarbreck D."/>
            <person name="Tabor P.E."/>
            <person name="Taudien S."/>
            <person name="Taylor T."/>
            <person name="Teague B."/>
            <person name="Thomas K."/>
            <person name="Thorpe A."/>
            <person name="Timms K."/>
            <person name="Tracey A."/>
            <person name="Trevanion S."/>
            <person name="Tromans A.C."/>
            <person name="d'Urso M."/>
            <person name="Verduzco D."/>
            <person name="Villasana D."/>
            <person name="Waldron L."/>
            <person name="Wall M."/>
            <person name="Wang Q."/>
            <person name="Warren J."/>
            <person name="Warry G.L."/>
            <person name="Wei X."/>
            <person name="West A."/>
            <person name="Whitehead S.L."/>
            <person name="Whiteley M.N."/>
            <person name="Wilkinson J.E."/>
            <person name="Willey D.L."/>
            <person name="Williams G."/>
            <person name="Williams L."/>
            <person name="Williamson A."/>
            <person name="Williamson H."/>
            <person name="Wilming L."/>
            <person name="Woodmansey R.L."/>
            <person name="Wray P.W."/>
            <person name="Yen J."/>
            <person name="Zhang J."/>
            <person name="Zhou J."/>
            <person name="Zoghbi H."/>
            <person name="Zorilla S."/>
            <person name="Buck D."/>
            <person name="Reinhardt R."/>
            <person name="Poustka A."/>
            <person name="Rosenthal A."/>
            <person name="Lehrach H."/>
            <person name="Meindl A."/>
            <person name="Minx P.J."/>
            <person name="Hillier L.W."/>
            <person name="Willard H.F."/>
            <person name="Wilson R.K."/>
            <person name="Waterston R.H."/>
            <person name="Rice C.M."/>
            <person name="Vaudin M."/>
            <person name="Coulson A."/>
            <person name="Nelson D.L."/>
            <person name="Weinstock G."/>
            <person name="Sulston J.E."/>
            <person name="Durbin R.M."/>
            <person name="Hubbard T."/>
            <person name="Gibbs R.A."/>
            <person name="Beck S."/>
            <person name="Rogers J."/>
            <person name="Bentley D.R."/>
        </authorList>
    </citation>
    <scope>NUCLEOTIDE SEQUENCE [LARGE SCALE GENOMIC DNA]</scope>
</reference>
<reference key="4">
    <citation type="journal article" date="2004" name="Genome Res.">
        <title>The status, quality, and expansion of the NIH full-length cDNA project: the Mammalian Gene Collection (MGC).</title>
        <authorList>
            <consortium name="The MGC Project Team"/>
        </authorList>
    </citation>
    <scope>NUCLEOTIDE SEQUENCE [LARGE SCALE MRNA] (ISOFORM 1)</scope>
</reference>
<reference key="5">
    <citation type="journal article" date="1989" name="Calcif. Tissue Int.">
        <title>Human amelogenins: sequences of 'TRAP' molecules.</title>
        <authorList>
            <person name="Fincham A.G."/>
            <person name="Hu Y."/>
            <person name="Pavlova Z."/>
            <person name="Slavkin H.C."/>
            <person name="Snead M.L."/>
        </authorList>
    </citation>
    <scope>PROTEIN SEQUENCE OF 17-60</scope>
</reference>
<reference key="6">
    <citation type="journal article" date="1994" name="Calcif. Tissue Int.">
        <title>Production of a monoclonal antibody against human amelogenin.</title>
        <authorList>
            <person name="Catalano-Sherman J."/>
            <person name="Laskov R."/>
            <person name="Palmon A."/>
            <person name="David S."/>
            <person name="Deutsch D."/>
        </authorList>
    </citation>
    <scope>NUCLEOTIDE SEQUENCE [MRNA] OF 17-37</scope>
</reference>
<reference key="7">
    <citation type="journal article" date="1991" name="Genomics">
        <title>A human X-Y homologous region encodes 'amelogenin'.</title>
        <authorList>
            <person name="Nakahori Y."/>
            <person name="Takenaka O."/>
            <person name="Nakagome Y."/>
        </authorList>
    </citation>
    <scope>NUCLEOTIDE SEQUENCE [GENOMIC DNA] OF 19-191 (ISOFORM 1)</scope>
</reference>
<reference key="8">
    <citation type="journal article" date="1993" name="J. Dent. Res.">
        <title>Amino acid sequence of a major human amelogenin protein employing Edman degradation and cDNA sequencing.</title>
        <authorList>
            <person name="Catalano-Sherman J."/>
            <person name="Palmon A."/>
            <person name="Burstein Y."/>
            <person name="Deutsch D."/>
        </authorList>
    </citation>
    <scope>NUCLEOTIDE SEQUENCE [GENOMIC DNA] OF 49-190</scope>
    <scope>PARTIAL PROTEIN SEQUENCE</scope>
    <source>
        <tissue>Tooth bud</tissue>
    </source>
</reference>
<reference key="9">
    <citation type="journal article" date="2015" name="Elife">
        <title>A secretory kinase complex regulates extracellular protein phosphorylation.</title>
        <authorList>
            <person name="Cui J."/>
            <person name="Xiao J."/>
            <person name="Tagliabracci V.S."/>
            <person name="Wen J."/>
            <person name="Rahdar M."/>
            <person name="Dixon J.E."/>
        </authorList>
    </citation>
    <scope>SUBCELLULAR LOCATION</scope>
    <scope>PHOSPHORYLATION</scope>
</reference>
<reference key="10">
    <citation type="journal article" date="1995" name="Genomics">
        <title>Amelogenin signal peptide mutation: correlation between mutations in the amelogenin gene (AMGX) and manifestations of X-linked amelogenesis imperfecta.</title>
        <authorList>
            <person name="Lagerstroem-Fermer M."/>
            <person name="Nilddon M."/>
            <person name="Baeckman B."/>
            <person name="Salido E."/>
            <person name="Shapiro L."/>
            <person name="Pettersson U."/>
            <person name="Landergren U."/>
        </authorList>
    </citation>
    <scope>VARIANT AI1E 5-ILE--ALA-8 DELINS THR</scope>
</reference>
<reference key="11">
    <citation type="journal article" date="1995" name="Hum. Mutat.">
        <title>Characterisation of molecular defects in X-linked amelogenesis imperfecta (AIH1).</title>
        <authorList>
            <person name="Lench N.J."/>
            <person name="Winter G.B."/>
        </authorList>
    </citation>
    <scope>VARIANT AI1E ILE-37</scope>
</reference>
<reference key="12">
    <citation type="journal article" date="2000" name="Arch. Oral Biol.">
        <title>Mutational analysis of X-linked amelogenesis imperfecta in multiple families.</title>
        <authorList>
            <person name="Hart S."/>
            <person name="Hart T."/>
            <person name="Gibson C."/>
            <person name="Wright J.T."/>
        </authorList>
    </citation>
    <scope>VARIANT AI1E THR-56</scope>
</reference>
<reference key="13">
    <citation type="journal article" date="1997" name="Arch. Oral Biol.">
        <title>An amelogenin gene defect associated with human X-linked amelogenesis imperfecta.</title>
        <authorList>
            <person name="Collier P.M."/>
            <person name="Sauk J.J."/>
            <person name="Rosenbloom S.J."/>
            <person name="Yuan Z.A."/>
            <person name="Gibson C.W."/>
        </authorList>
    </citation>
    <scope>VARIANT AI1E THR-56</scope>
</reference>
<reference key="14">
    <citation type="journal article" date="2004" name="J. Dent. Res.">
        <title>Amelogenin p.M1T and p.W4S mutations underlying hypoplastic X-linked amelogenesis imperfecta.</title>
        <authorList>
            <person name="Kim J.-W."/>
            <person name="Simmer J.P."/>
            <person name="Hu Y.Y."/>
            <person name="Lin B.P.-L."/>
            <person name="Boyd C."/>
            <person name="Wright J.T."/>
            <person name="Yamada C.J.M."/>
            <person name="Rayes S.K."/>
            <person name="Feigal R.J."/>
            <person name="Hu J.C.-C."/>
        </authorList>
    </citation>
    <scope>VARIANT AI1E SER-4</scope>
</reference>
<accession>Q99217</accession>
<accession>Q96NW6</accession>
<accession>Q9UCA7</accession>
<name>AMELX_HUMAN</name>
<proteinExistence type="evidence at protein level"/>